<gene>
    <name type="primary">CNTN3</name>
    <name type="synonym">KIAA1496</name>
    <name type="synonym">PANG</name>
</gene>
<dbReference type="EMBL" id="AC016950">
    <property type="status" value="NOT_ANNOTATED_CDS"/>
    <property type="molecule type" value="Genomic_DNA"/>
</dbReference>
<dbReference type="EMBL" id="AC024222">
    <property type="status" value="NOT_ANNOTATED_CDS"/>
    <property type="molecule type" value="Genomic_DNA"/>
</dbReference>
<dbReference type="EMBL" id="AC128653">
    <property type="status" value="NOT_ANNOTATED_CDS"/>
    <property type="molecule type" value="Genomic_DNA"/>
</dbReference>
<dbReference type="EMBL" id="AC128656">
    <property type="status" value="NOT_ANNOTATED_CDS"/>
    <property type="molecule type" value="Genomic_DNA"/>
</dbReference>
<dbReference type="EMBL" id="BC150608">
    <property type="protein sequence ID" value="AAI50609.1"/>
    <property type="molecule type" value="mRNA"/>
</dbReference>
<dbReference type="EMBL" id="AB040929">
    <property type="protein sequence ID" value="BAA96020.1"/>
    <property type="molecule type" value="mRNA"/>
</dbReference>
<dbReference type="EMBL" id="AL512746">
    <property type="protein sequence ID" value="CAC21671.1"/>
    <property type="molecule type" value="mRNA"/>
</dbReference>
<dbReference type="CCDS" id="CCDS33790.1"/>
<dbReference type="RefSeq" id="NP_001380305.1">
    <property type="nucleotide sequence ID" value="NM_001393376.1"/>
</dbReference>
<dbReference type="RefSeq" id="NP_065923.1">
    <property type="nucleotide sequence ID" value="NM_020872.3"/>
</dbReference>
<dbReference type="RefSeq" id="XP_005264814.1">
    <property type="nucleotide sequence ID" value="XM_005264757.3"/>
</dbReference>
<dbReference type="RefSeq" id="XP_016861996.1">
    <property type="nucleotide sequence ID" value="XM_017006507.1"/>
</dbReference>
<dbReference type="PDB" id="1WJ3">
    <property type="method" value="NMR"/>
    <property type="chains" value="A=893-996"/>
</dbReference>
<dbReference type="PDBsum" id="1WJ3"/>
<dbReference type="SMR" id="Q9P232"/>
<dbReference type="FunCoup" id="Q9P232">
    <property type="interactions" value="524"/>
</dbReference>
<dbReference type="IntAct" id="Q9P232">
    <property type="interactions" value="4"/>
</dbReference>
<dbReference type="MINT" id="Q9P232"/>
<dbReference type="STRING" id="9606.ENSP00000263665"/>
<dbReference type="GlyConnect" id="1931">
    <property type="glycosylation" value="10 N-Linked glycans (9 sites)"/>
</dbReference>
<dbReference type="GlyCosmos" id="Q9P232">
    <property type="glycosylation" value="13 sites, 10 glycans"/>
</dbReference>
<dbReference type="GlyGen" id="Q9P232">
    <property type="glycosylation" value="13 sites, 12 N-linked glycans (9 sites)"/>
</dbReference>
<dbReference type="iPTMnet" id="Q9P232"/>
<dbReference type="PhosphoSitePlus" id="Q9P232"/>
<dbReference type="BioMuta" id="CNTN3"/>
<dbReference type="DMDM" id="296439395"/>
<dbReference type="jPOST" id="Q9P232"/>
<dbReference type="MassIVE" id="Q9P232"/>
<dbReference type="PaxDb" id="9606-ENSP00000263665"/>
<dbReference type="PeptideAtlas" id="Q9P232"/>
<dbReference type="ProteomicsDB" id="83720"/>
<dbReference type="Antibodypedia" id="1216">
    <property type="antibodies" value="162 antibodies from 24 providers"/>
</dbReference>
<dbReference type="DNASU" id="5067"/>
<dbReference type="Ensembl" id="ENST00000263665.7">
    <property type="protein sequence ID" value="ENSP00000263665.6"/>
    <property type="gene ID" value="ENSG00000113805.9"/>
</dbReference>
<dbReference type="GeneID" id="5067"/>
<dbReference type="KEGG" id="hsa:5067"/>
<dbReference type="MANE-Select" id="ENST00000263665.7">
    <property type="protein sequence ID" value="ENSP00000263665.6"/>
    <property type="RefSeq nucleotide sequence ID" value="NM_020872.3"/>
    <property type="RefSeq protein sequence ID" value="NP_065923.1"/>
</dbReference>
<dbReference type="UCSC" id="uc003dpm.2">
    <property type="organism name" value="human"/>
</dbReference>
<dbReference type="AGR" id="HGNC:2173"/>
<dbReference type="CTD" id="5067"/>
<dbReference type="DisGeNET" id="5067"/>
<dbReference type="GeneCards" id="CNTN3"/>
<dbReference type="HGNC" id="HGNC:2173">
    <property type="gene designation" value="CNTN3"/>
</dbReference>
<dbReference type="HPA" id="ENSG00000113805">
    <property type="expression patterns" value="Low tissue specificity"/>
</dbReference>
<dbReference type="MalaCards" id="CNTN3"/>
<dbReference type="MIM" id="601325">
    <property type="type" value="gene"/>
</dbReference>
<dbReference type="neXtProt" id="NX_Q9P232"/>
<dbReference type="OpenTargets" id="ENSG00000113805"/>
<dbReference type="PharmGKB" id="PA26687"/>
<dbReference type="VEuPathDB" id="HostDB:ENSG00000113805"/>
<dbReference type="eggNOG" id="KOG3513">
    <property type="taxonomic scope" value="Eukaryota"/>
</dbReference>
<dbReference type="GeneTree" id="ENSGT00940000160282"/>
<dbReference type="HOGENOM" id="CLU_005756_0_0_1"/>
<dbReference type="InParanoid" id="Q9P232"/>
<dbReference type="OMA" id="HKLMGAR"/>
<dbReference type="OrthoDB" id="5982258at2759"/>
<dbReference type="PAN-GO" id="Q9P232">
    <property type="GO annotations" value="1 GO annotation based on evolutionary models"/>
</dbReference>
<dbReference type="PhylomeDB" id="Q9P232"/>
<dbReference type="TreeFam" id="TF351103"/>
<dbReference type="PathwayCommons" id="Q9P232"/>
<dbReference type="Reactome" id="R-HSA-163125">
    <property type="pathway name" value="Post-translational modification: synthesis of GPI-anchored proteins"/>
</dbReference>
<dbReference type="SignaLink" id="Q9P232"/>
<dbReference type="BioGRID-ORCS" id="5067">
    <property type="hits" value="6 hits in 1144 CRISPR screens"/>
</dbReference>
<dbReference type="ChiTaRS" id="CNTN3">
    <property type="organism name" value="human"/>
</dbReference>
<dbReference type="EvolutionaryTrace" id="Q9P232"/>
<dbReference type="GeneWiki" id="CNTN3"/>
<dbReference type="GenomeRNAi" id="5067"/>
<dbReference type="Pharos" id="Q9P232">
    <property type="development level" value="Tbio"/>
</dbReference>
<dbReference type="PRO" id="PR:Q9P232"/>
<dbReference type="Proteomes" id="UP000005640">
    <property type="component" value="Chromosome 3"/>
</dbReference>
<dbReference type="RNAct" id="Q9P232">
    <property type="molecule type" value="protein"/>
</dbReference>
<dbReference type="Bgee" id="ENSG00000113805">
    <property type="expression patterns" value="Expressed in Brodmann (1909) area 23 and 149 other cell types or tissues"/>
</dbReference>
<dbReference type="GO" id="GO:0005576">
    <property type="term" value="C:extracellular region"/>
    <property type="evidence" value="ECO:0000304"/>
    <property type="project" value="Reactome"/>
</dbReference>
<dbReference type="GO" id="GO:0043005">
    <property type="term" value="C:neuron projection"/>
    <property type="evidence" value="ECO:0000318"/>
    <property type="project" value="GO_Central"/>
</dbReference>
<dbReference type="GO" id="GO:0005886">
    <property type="term" value="C:plasma membrane"/>
    <property type="evidence" value="ECO:0000304"/>
    <property type="project" value="Reactome"/>
</dbReference>
<dbReference type="GO" id="GO:0098552">
    <property type="term" value="C:side of membrane"/>
    <property type="evidence" value="ECO:0007669"/>
    <property type="project" value="UniProtKB-KW"/>
</dbReference>
<dbReference type="GO" id="GO:0007155">
    <property type="term" value="P:cell adhesion"/>
    <property type="evidence" value="ECO:0007669"/>
    <property type="project" value="UniProtKB-KW"/>
</dbReference>
<dbReference type="CDD" id="cd00063">
    <property type="entry name" value="FN3"/>
    <property type="match status" value="4"/>
</dbReference>
<dbReference type="FunFam" id="2.60.40.10:FF:000035">
    <property type="entry name" value="Contactin 1"/>
    <property type="match status" value="1"/>
</dbReference>
<dbReference type="FunFam" id="2.60.40.10:FF:000044">
    <property type="entry name" value="Contactin 1"/>
    <property type="match status" value="1"/>
</dbReference>
<dbReference type="FunFam" id="2.60.40.10:FF:000047">
    <property type="entry name" value="Contactin 1"/>
    <property type="match status" value="1"/>
</dbReference>
<dbReference type="FunFam" id="2.60.40.10:FF:000052">
    <property type="entry name" value="Contactin 1"/>
    <property type="match status" value="1"/>
</dbReference>
<dbReference type="FunFam" id="2.60.40.10:FF:000054">
    <property type="entry name" value="Contactin 1"/>
    <property type="match status" value="1"/>
</dbReference>
<dbReference type="FunFam" id="2.60.40.10:FF:000064">
    <property type="entry name" value="Contactin 1"/>
    <property type="match status" value="1"/>
</dbReference>
<dbReference type="FunFam" id="2.60.40.10:FF:000273">
    <property type="entry name" value="contactin-3 isoform X1"/>
    <property type="match status" value="1"/>
</dbReference>
<dbReference type="FunFam" id="2.60.40.10:FF:000004">
    <property type="entry name" value="DCC isoform 1"/>
    <property type="match status" value="2"/>
</dbReference>
<dbReference type="FunFam" id="2.60.40.10:FF:000028">
    <property type="entry name" value="Neuronal cell adhesion molecule"/>
    <property type="match status" value="1"/>
</dbReference>
<dbReference type="Gene3D" id="2.60.40.10">
    <property type="entry name" value="Immunoglobulins"/>
    <property type="match status" value="10"/>
</dbReference>
<dbReference type="InterPro" id="IPR003961">
    <property type="entry name" value="FN3_dom"/>
</dbReference>
<dbReference type="InterPro" id="IPR036116">
    <property type="entry name" value="FN3_sf"/>
</dbReference>
<dbReference type="InterPro" id="IPR007110">
    <property type="entry name" value="Ig-like_dom"/>
</dbReference>
<dbReference type="InterPro" id="IPR036179">
    <property type="entry name" value="Ig-like_dom_sf"/>
</dbReference>
<dbReference type="InterPro" id="IPR013783">
    <property type="entry name" value="Ig-like_fold"/>
</dbReference>
<dbReference type="InterPro" id="IPR013098">
    <property type="entry name" value="Ig_I-set"/>
</dbReference>
<dbReference type="InterPro" id="IPR003599">
    <property type="entry name" value="Ig_sub"/>
</dbReference>
<dbReference type="InterPro" id="IPR003598">
    <property type="entry name" value="Ig_sub2"/>
</dbReference>
<dbReference type="PANTHER" id="PTHR44170:SF18">
    <property type="entry name" value="CONTACTIN 3B-RELATED"/>
    <property type="match status" value="1"/>
</dbReference>
<dbReference type="PANTHER" id="PTHR44170">
    <property type="entry name" value="PROTEIN SIDEKICK"/>
    <property type="match status" value="1"/>
</dbReference>
<dbReference type="Pfam" id="PF00041">
    <property type="entry name" value="fn3"/>
    <property type="match status" value="4"/>
</dbReference>
<dbReference type="Pfam" id="PF07679">
    <property type="entry name" value="I-set"/>
    <property type="match status" value="2"/>
</dbReference>
<dbReference type="Pfam" id="PF13927">
    <property type="entry name" value="Ig_3"/>
    <property type="match status" value="4"/>
</dbReference>
<dbReference type="SMART" id="SM00060">
    <property type="entry name" value="FN3"/>
    <property type="match status" value="4"/>
</dbReference>
<dbReference type="SMART" id="SM00409">
    <property type="entry name" value="IG"/>
    <property type="match status" value="6"/>
</dbReference>
<dbReference type="SMART" id="SM00408">
    <property type="entry name" value="IGc2"/>
    <property type="match status" value="6"/>
</dbReference>
<dbReference type="SUPFAM" id="SSF49265">
    <property type="entry name" value="Fibronectin type III"/>
    <property type="match status" value="2"/>
</dbReference>
<dbReference type="SUPFAM" id="SSF48726">
    <property type="entry name" value="Immunoglobulin"/>
    <property type="match status" value="6"/>
</dbReference>
<dbReference type="PROSITE" id="PS50853">
    <property type="entry name" value="FN3"/>
    <property type="match status" value="4"/>
</dbReference>
<dbReference type="PROSITE" id="PS50835">
    <property type="entry name" value="IG_LIKE"/>
    <property type="match status" value="6"/>
</dbReference>
<name>CNTN3_HUMAN</name>
<proteinExistence type="evidence at protein level"/>
<reference key="1">
    <citation type="journal article" date="2006" name="Nature">
        <title>The DNA sequence, annotation and analysis of human chromosome 3.</title>
        <authorList>
            <person name="Muzny D.M."/>
            <person name="Scherer S.E."/>
            <person name="Kaul R."/>
            <person name="Wang J."/>
            <person name="Yu J."/>
            <person name="Sudbrak R."/>
            <person name="Buhay C.J."/>
            <person name="Chen R."/>
            <person name="Cree A."/>
            <person name="Ding Y."/>
            <person name="Dugan-Rocha S."/>
            <person name="Gill R."/>
            <person name="Gunaratne P."/>
            <person name="Harris R.A."/>
            <person name="Hawes A.C."/>
            <person name="Hernandez J."/>
            <person name="Hodgson A.V."/>
            <person name="Hume J."/>
            <person name="Jackson A."/>
            <person name="Khan Z.M."/>
            <person name="Kovar-Smith C."/>
            <person name="Lewis L.R."/>
            <person name="Lozado R.J."/>
            <person name="Metzker M.L."/>
            <person name="Milosavljevic A."/>
            <person name="Miner G.R."/>
            <person name="Morgan M.B."/>
            <person name="Nazareth L.V."/>
            <person name="Scott G."/>
            <person name="Sodergren E."/>
            <person name="Song X.-Z."/>
            <person name="Steffen D."/>
            <person name="Wei S."/>
            <person name="Wheeler D.A."/>
            <person name="Wright M.W."/>
            <person name="Worley K.C."/>
            <person name="Yuan Y."/>
            <person name="Zhang Z."/>
            <person name="Adams C.Q."/>
            <person name="Ansari-Lari M.A."/>
            <person name="Ayele M."/>
            <person name="Brown M.J."/>
            <person name="Chen G."/>
            <person name="Chen Z."/>
            <person name="Clendenning J."/>
            <person name="Clerc-Blankenburg K.P."/>
            <person name="Chen R."/>
            <person name="Chen Z."/>
            <person name="Davis C."/>
            <person name="Delgado O."/>
            <person name="Dinh H.H."/>
            <person name="Dong W."/>
            <person name="Draper H."/>
            <person name="Ernst S."/>
            <person name="Fu G."/>
            <person name="Gonzalez-Garay M.L."/>
            <person name="Garcia D.K."/>
            <person name="Gillett W."/>
            <person name="Gu J."/>
            <person name="Hao B."/>
            <person name="Haugen E."/>
            <person name="Havlak P."/>
            <person name="He X."/>
            <person name="Hennig S."/>
            <person name="Hu S."/>
            <person name="Huang W."/>
            <person name="Jackson L.R."/>
            <person name="Jacob L.S."/>
            <person name="Kelly S.H."/>
            <person name="Kube M."/>
            <person name="Levy R."/>
            <person name="Li Z."/>
            <person name="Liu B."/>
            <person name="Liu J."/>
            <person name="Liu W."/>
            <person name="Lu J."/>
            <person name="Maheshwari M."/>
            <person name="Nguyen B.-V."/>
            <person name="Okwuonu G.O."/>
            <person name="Palmeiri A."/>
            <person name="Pasternak S."/>
            <person name="Perez L.M."/>
            <person name="Phelps K.A."/>
            <person name="Plopper F.J."/>
            <person name="Qiang B."/>
            <person name="Raymond C."/>
            <person name="Rodriguez R."/>
            <person name="Saenphimmachak C."/>
            <person name="Santibanez J."/>
            <person name="Shen H."/>
            <person name="Shen Y."/>
            <person name="Subramanian S."/>
            <person name="Tabor P.E."/>
            <person name="Verduzco D."/>
            <person name="Waldron L."/>
            <person name="Wang J."/>
            <person name="Wang J."/>
            <person name="Wang Q."/>
            <person name="Williams G.A."/>
            <person name="Wong G.K.-S."/>
            <person name="Yao Z."/>
            <person name="Zhang J."/>
            <person name="Zhang X."/>
            <person name="Zhao G."/>
            <person name="Zhou J."/>
            <person name="Zhou Y."/>
            <person name="Nelson D."/>
            <person name="Lehrach H."/>
            <person name="Reinhardt R."/>
            <person name="Naylor S.L."/>
            <person name="Yang H."/>
            <person name="Olson M."/>
            <person name="Weinstock G."/>
            <person name="Gibbs R.A."/>
        </authorList>
    </citation>
    <scope>NUCLEOTIDE SEQUENCE [LARGE SCALE GENOMIC DNA]</scope>
</reference>
<reference key="2">
    <citation type="journal article" date="2004" name="Genome Res.">
        <title>The status, quality, and expansion of the NIH full-length cDNA project: the Mammalian Gene Collection (MGC).</title>
        <authorList>
            <consortium name="The MGC Project Team"/>
        </authorList>
    </citation>
    <scope>NUCLEOTIDE SEQUENCE [LARGE SCALE MRNA]</scope>
    <scope>VARIANT SER-708</scope>
    <source>
        <tissue>Testis</tissue>
    </source>
</reference>
<reference key="3">
    <citation type="journal article" date="2000" name="DNA Res.">
        <title>Prediction of the coding sequences of unidentified human genes. XVII. The complete sequences of 100 new cDNA clones from brain which code for large proteins in vitro.</title>
        <authorList>
            <person name="Nagase T."/>
            <person name="Kikuno R."/>
            <person name="Ishikawa K."/>
            <person name="Hirosawa M."/>
            <person name="Ohara O."/>
        </authorList>
    </citation>
    <scope>NUCLEOTIDE SEQUENCE [LARGE SCALE MRNA] OF 109-1028</scope>
    <source>
        <tissue>Brain</tissue>
    </source>
</reference>
<reference key="4">
    <citation type="journal article" date="2007" name="BMC Genomics">
        <title>The full-ORF clone resource of the German cDNA consortium.</title>
        <authorList>
            <person name="Bechtel S."/>
            <person name="Rosenfelder H."/>
            <person name="Duda A."/>
            <person name="Schmidt C.P."/>
            <person name="Ernst U."/>
            <person name="Wellenreuther R."/>
            <person name="Mehrle A."/>
            <person name="Schuster C."/>
            <person name="Bahr A."/>
            <person name="Bloecker H."/>
            <person name="Heubner D."/>
            <person name="Hoerlein A."/>
            <person name="Michel G."/>
            <person name="Wedler H."/>
            <person name="Koehrer K."/>
            <person name="Ottenwaelder B."/>
            <person name="Poustka A."/>
            <person name="Wiemann S."/>
            <person name="Schupp I."/>
        </authorList>
    </citation>
    <scope>NUCLEOTIDE SEQUENCE [LARGE SCALE MRNA] OF 984-1028</scope>
    <source>
        <tissue>Brain</tissue>
    </source>
</reference>
<reference key="5">
    <citation type="journal article" date="2000" name="Genomics">
        <title>Human NB-2 of the contactin subgroup molecules: chromosomal localization of the gene (CNTN5) and distinct expression pattern from other subgroup members.</title>
        <authorList>
            <person name="Kamei Y."/>
            <person name="Takeda Y."/>
            <person name="Teramoto K."/>
            <person name="Tsutsumi O."/>
            <person name="Taketani Y."/>
            <person name="Watanabe K."/>
        </authorList>
    </citation>
    <scope>TISSUE SPECIFICITY</scope>
</reference>
<reference key="6">
    <citation type="journal article" date="2005" name="J. Proteome Res.">
        <title>Human plasma N-glycoproteome analysis by immunoaffinity subtraction, hydrazide chemistry, and mass spectrometry.</title>
        <authorList>
            <person name="Liu T."/>
            <person name="Qian W.-J."/>
            <person name="Gritsenko M.A."/>
            <person name="Camp D.G. II"/>
            <person name="Monroe M.E."/>
            <person name="Moore R.J."/>
            <person name="Smith R.D."/>
        </authorList>
    </citation>
    <scope>GLYCOSYLATION [LARGE SCALE ANALYSIS] AT ASN-489; ASN-860 AND ASN-931</scope>
    <source>
        <tissue>Plasma</tissue>
    </source>
</reference>
<reference key="7">
    <citation type="journal article" date="2010" name="Proc. Natl. Acad. Sci. U.S.A.">
        <title>The protein tyrosine phosphatases PTPRZ and PTPRG bind to distinct members of the contactin family of neural recognition molecules.</title>
        <authorList>
            <person name="Bouyain S."/>
            <person name="Watkins D.J."/>
        </authorList>
    </citation>
    <scope>INTERACTION WITH PTPRG</scope>
</reference>
<reference key="8">
    <citation type="submission" date="2004-11" db="PDB data bank">
        <title>Solution structure of the fourth FN3 domain of KIAA1496 protein.</title>
        <authorList>
            <consortium name="RIKEN structural genomics initiative (RSGI)"/>
        </authorList>
    </citation>
    <scope>STRUCTURE BY NMR OF 893-996</scope>
</reference>
<organism>
    <name type="scientific">Homo sapiens</name>
    <name type="common">Human</name>
    <dbReference type="NCBI Taxonomy" id="9606"/>
    <lineage>
        <taxon>Eukaryota</taxon>
        <taxon>Metazoa</taxon>
        <taxon>Chordata</taxon>
        <taxon>Craniata</taxon>
        <taxon>Vertebrata</taxon>
        <taxon>Euteleostomi</taxon>
        <taxon>Mammalia</taxon>
        <taxon>Eutheria</taxon>
        <taxon>Euarchontoglires</taxon>
        <taxon>Primates</taxon>
        <taxon>Haplorrhini</taxon>
        <taxon>Catarrhini</taxon>
        <taxon>Hominidae</taxon>
        <taxon>Homo</taxon>
    </lineage>
</organism>
<evidence type="ECO:0000250" key="1"/>
<evidence type="ECO:0000255" key="2"/>
<evidence type="ECO:0000255" key="3">
    <source>
        <dbReference type="PROSITE-ProRule" id="PRU00114"/>
    </source>
</evidence>
<evidence type="ECO:0000255" key="4">
    <source>
        <dbReference type="PROSITE-ProRule" id="PRU00316"/>
    </source>
</evidence>
<evidence type="ECO:0000256" key="5">
    <source>
        <dbReference type="SAM" id="MobiDB-lite"/>
    </source>
</evidence>
<evidence type="ECO:0000269" key="6">
    <source>
    </source>
</evidence>
<evidence type="ECO:0000269" key="7">
    <source>
    </source>
</evidence>
<evidence type="ECO:0000269" key="8">
    <source>
    </source>
</evidence>
<evidence type="ECO:0000269" key="9">
    <source>
    </source>
</evidence>
<evidence type="ECO:0000305" key="10"/>
<evidence type="ECO:0007829" key="11">
    <source>
        <dbReference type="PDB" id="1WJ3"/>
    </source>
</evidence>
<accession>Q9P232</accession>
<accession>B9EK50</accession>
<accession>Q9H039</accession>
<feature type="signal peptide" evidence="2">
    <location>
        <begin position="1"/>
        <end position="19"/>
    </location>
</feature>
<feature type="chain" id="PRO_0000014705" description="Contactin-3">
    <location>
        <begin position="20"/>
        <end position="1002"/>
    </location>
</feature>
<feature type="propeptide" id="PRO_0000014706" description="Removed in mature form" evidence="2">
    <location>
        <begin position="1003"/>
        <end position="1028"/>
    </location>
</feature>
<feature type="domain" description="Ig-like C2-type 1">
    <location>
        <begin position="26"/>
        <end position="117"/>
    </location>
</feature>
<feature type="domain" description="Ig-like C2-type 2">
    <location>
        <begin position="122"/>
        <end position="208"/>
    </location>
</feature>
<feature type="domain" description="Ig-like C2-type 3">
    <location>
        <begin position="227"/>
        <end position="313"/>
    </location>
</feature>
<feature type="domain" description="Ig-like C2-type 4">
    <location>
        <begin position="318"/>
        <end position="402"/>
    </location>
</feature>
<feature type="domain" description="Ig-like C2-type 5">
    <location>
        <begin position="408"/>
        <end position="497"/>
    </location>
</feature>
<feature type="domain" description="Ig-like C2-type 6">
    <location>
        <begin position="499"/>
        <end position="593"/>
    </location>
</feature>
<feature type="domain" description="Fibronectin type-III 1" evidence="4">
    <location>
        <begin position="600"/>
        <end position="698"/>
    </location>
</feature>
<feature type="domain" description="Fibronectin type-III 2" evidence="4">
    <location>
        <begin position="703"/>
        <end position="800"/>
    </location>
</feature>
<feature type="domain" description="Fibronectin type-III 3" evidence="4">
    <location>
        <begin position="805"/>
        <end position="901"/>
    </location>
</feature>
<feature type="domain" description="Fibronectin type-III 4" evidence="4">
    <location>
        <begin position="902"/>
        <end position="998"/>
    </location>
</feature>
<feature type="region of interest" description="Disordered" evidence="5">
    <location>
        <begin position="684"/>
        <end position="713"/>
    </location>
</feature>
<feature type="lipid moiety-binding region" description="GPI-anchor amidated serine" evidence="2">
    <location>
        <position position="1002"/>
    </location>
</feature>
<feature type="glycosylation site" description="N-linked (GlcNAc...) asparagine" evidence="2">
    <location>
        <position position="65"/>
    </location>
</feature>
<feature type="glycosylation site" description="N-linked (GlcNAc...) asparagine" evidence="2">
    <location>
        <position position="193"/>
    </location>
</feature>
<feature type="glycosylation site" description="N-linked (GlcNAc...) asparagine" evidence="2">
    <location>
        <position position="375"/>
    </location>
</feature>
<feature type="glycosylation site" description="N-linked (GlcNAc...) asparagine" evidence="2">
    <location>
        <position position="468"/>
    </location>
</feature>
<feature type="glycosylation site" description="N-linked (GlcNAc...) asparagine" evidence="8">
    <location>
        <position position="489"/>
    </location>
</feature>
<feature type="glycosylation site" description="N-linked (GlcNAc...) asparagine" evidence="2">
    <location>
        <position position="765"/>
    </location>
</feature>
<feature type="glycosylation site" description="N-linked (GlcNAc...) asparagine" evidence="8">
    <location>
        <position position="860"/>
    </location>
</feature>
<feature type="glycosylation site" description="N-linked (GlcNAc...) asparagine" evidence="2">
    <location>
        <position position="895"/>
    </location>
</feature>
<feature type="glycosylation site" description="N-linked (GlcNAc...) asparagine" evidence="2">
    <location>
        <position position="913"/>
    </location>
</feature>
<feature type="glycosylation site" description="N-linked (GlcNAc...) asparagine" evidence="8">
    <location>
        <position position="931"/>
    </location>
</feature>
<feature type="glycosylation site" description="N-linked (GlcNAc...) asparagine" evidence="2">
    <location>
        <position position="956"/>
    </location>
</feature>
<feature type="disulfide bond" evidence="3">
    <location>
        <begin position="50"/>
        <end position="100"/>
    </location>
</feature>
<feature type="disulfide bond" evidence="3">
    <location>
        <begin position="144"/>
        <end position="196"/>
    </location>
</feature>
<feature type="disulfide bond" evidence="3">
    <location>
        <begin position="249"/>
        <end position="297"/>
    </location>
</feature>
<feature type="disulfide bond" evidence="3">
    <location>
        <begin position="339"/>
        <end position="386"/>
    </location>
</feature>
<feature type="disulfide bond" evidence="3">
    <location>
        <begin position="431"/>
        <end position="479"/>
    </location>
</feature>
<feature type="disulfide bond" evidence="3">
    <location>
        <begin position="521"/>
        <end position="577"/>
    </location>
</feature>
<feature type="sequence variant" id="VAR_019906" description="In dbSNP:rs626578.">
    <original>S</original>
    <variation>N</variation>
    <location>
        <position position="630"/>
    </location>
</feature>
<feature type="sequence variant" id="VAR_056042" description="In dbSNP:rs626578." evidence="7">
    <original>N</original>
    <variation>S</variation>
    <location>
        <position position="708"/>
    </location>
</feature>
<feature type="strand" evidence="11">
    <location>
        <begin position="918"/>
        <end position="922"/>
    </location>
</feature>
<feature type="strand" evidence="11">
    <location>
        <begin position="930"/>
        <end position="932"/>
    </location>
</feature>
<feature type="strand" evidence="11">
    <location>
        <begin position="935"/>
        <end position="946"/>
    </location>
</feature>
<feature type="strand" evidence="11">
    <location>
        <begin position="951"/>
        <end position="963"/>
    </location>
</feature>
<feature type="strand" evidence="11">
    <location>
        <begin position="970"/>
        <end position="980"/>
    </location>
</feature>
<feature type="strand" evidence="11">
    <location>
        <begin position="989"/>
        <end position="991"/>
    </location>
</feature>
<keyword id="KW-0002">3D-structure</keyword>
<keyword id="KW-0130">Cell adhesion</keyword>
<keyword id="KW-1003">Cell membrane</keyword>
<keyword id="KW-1015">Disulfide bond</keyword>
<keyword id="KW-0325">Glycoprotein</keyword>
<keyword id="KW-0336">GPI-anchor</keyword>
<keyword id="KW-0393">Immunoglobulin domain</keyword>
<keyword id="KW-0449">Lipoprotein</keyword>
<keyword id="KW-0472">Membrane</keyword>
<keyword id="KW-1267">Proteomics identification</keyword>
<keyword id="KW-1185">Reference proteome</keyword>
<keyword id="KW-0677">Repeat</keyword>
<keyword id="KW-0732">Signal</keyword>
<comment type="function">
    <text evidence="1">Contactins mediate cell surface interactions during nervous system development. Has some neurite outgrowth-promoting activity (By similarity).</text>
</comment>
<comment type="subunit">
    <text evidence="9">Interacts with PTPRG.</text>
</comment>
<comment type="subcellular location">
    <subcellularLocation>
        <location evidence="1">Cell membrane</location>
        <topology evidence="1">Lipid-anchor</topology>
        <topology evidence="1">GPI-anchor</topology>
    </subcellularLocation>
</comment>
<comment type="tissue specificity">
    <text evidence="6">In brain, it is expressed in frontal lobe, occipital lobe, cerebellum and amygdala.</text>
</comment>
<comment type="similarity">
    <text evidence="10">Belongs to the immunoglobulin superfamily. Contactin family.</text>
</comment>
<sequence>MMFPWKQLILLSFIGCLGGELLLQGPVFIKEPSNSIFPVGSEDKKITLHCEARGNPSPHYRWQLNGSDIDMSMEHRYKLNGGNLVVINPNRNWDTGTYQCFATNSLGTIVSREAKLQFAYLENFKTKMRSTVSVREGQGVVLLCGPPPHSGELSYAWIFNEYPSFVEEDSRRFVSQETGHLYISKVEPSDVGNYTCVVTSMVTNARVLGSPTPLVLRSDGVMGEYEPKIEVQFPETLPAAKGSTVKLECFALGNPIPQINWRRSDGLPFSSKIKLRKFSGVLEIPNFQQEDAGSYECIAENSRGKNVARGRLTYYAKPHWVQLIKDVEIAVEDSLYWECRASGKPKPSYRWLKNGAALVLEERTQIENGALTISNLSVTDSGMFQCIAENKHGLVYSSAELKVVASAPDFSKNPMKKLVQVQVGSLVSLDCKPRASPRALSSWKKGDVSVQEHERISLLNDGGLKIANVTKADAGTYTCMAENQFGKANGTTHLVVTEPTRITLAPSNMDVSVGESVILPCQVQHDPLLDIIFTWYFNGALADFKKDGSHFEKVGGSSSGDLMIRNIQLKHSGKYVCMVQTGVDSVSSAADLIVRGSPGPPENVKVDEITDTTAQLSWKEGKDNHSPVISYSIQARTPFSVGWQTVTTVPEVIDGKTHTATVVELNPWVEYEFRVVASNKIGGGEPSLPSEKVRTEEAVPEVPPSEVNGGGGSRSELVITWDPVPEELQNGEGFGYVVAFRPLGVTTWIQTVVTSPDTPRYVFRNESIVPYSPYEVKVGVYNNKGEGPFSPVTTVFSAEEEPTVAPSQVSANSLSSSEIEVSWNTIPWKLSNGHLLGYEVRYWNGGGKEESSSKMKVAGNETSARLRGLKSNLAYYTAVRAYNSAGAGPFSATVNVTTKKTPPSQPPGNVVWNATDTKVLLNWEQVKAMENESEVTGYKVFYRTSSQNNVQVLNTNKTSAELVLPIKEDYIIEVKATTDGGDGTSSEQIRIPRITSMDARGSTSAISNVHPMSSYMPIVLFLIVYVLW</sequence>
<protein>
    <recommendedName>
        <fullName>Contactin-3</fullName>
    </recommendedName>
    <alternativeName>
        <fullName>Brain-derived immunoglobulin superfamily protein 1</fullName>
        <shortName>BIG-1</shortName>
    </alternativeName>
    <alternativeName>
        <fullName>Plasmacytoma-associated neuronal glycoprotein</fullName>
    </alternativeName>
</protein>